<name>HTPG_CLOBL</name>
<feature type="chain" id="PRO_1000014913" description="Chaperone protein HtpG">
    <location>
        <begin position="1"/>
        <end position="626"/>
    </location>
</feature>
<feature type="region of interest" description="A; substrate-binding" evidence="1">
    <location>
        <begin position="1"/>
        <end position="341"/>
    </location>
</feature>
<feature type="region of interest" description="B" evidence="1">
    <location>
        <begin position="342"/>
        <end position="552"/>
    </location>
</feature>
<feature type="region of interest" description="Disordered" evidence="2">
    <location>
        <begin position="490"/>
        <end position="509"/>
    </location>
</feature>
<feature type="region of interest" description="C" evidence="1">
    <location>
        <begin position="553"/>
        <end position="626"/>
    </location>
</feature>
<feature type="compositionally biased region" description="Basic and acidic residues" evidence="2">
    <location>
        <begin position="498"/>
        <end position="509"/>
    </location>
</feature>
<evidence type="ECO:0000255" key="1">
    <source>
        <dbReference type="HAMAP-Rule" id="MF_00505"/>
    </source>
</evidence>
<evidence type="ECO:0000256" key="2">
    <source>
        <dbReference type="SAM" id="MobiDB-lite"/>
    </source>
</evidence>
<reference key="1">
    <citation type="submission" date="2007-06" db="EMBL/GenBank/DDBJ databases">
        <authorList>
            <person name="Brinkac L.M."/>
            <person name="Daugherty S."/>
            <person name="Dodson R.J."/>
            <person name="Madupu R."/>
            <person name="Brown J.L."/>
            <person name="Bruce D."/>
            <person name="Detter C."/>
            <person name="Munk C."/>
            <person name="Smith L.A."/>
            <person name="Smith T.J."/>
            <person name="White O."/>
            <person name="Brettin T.S."/>
        </authorList>
    </citation>
    <scope>NUCLEOTIDE SEQUENCE [LARGE SCALE GENOMIC DNA]</scope>
    <source>
        <strain>Langeland / NCTC 10281 / Type F</strain>
    </source>
</reference>
<proteinExistence type="inferred from homology"/>
<keyword id="KW-0067">ATP-binding</keyword>
<keyword id="KW-0143">Chaperone</keyword>
<keyword id="KW-0963">Cytoplasm</keyword>
<keyword id="KW-0547">Nucleotide-binding</keyword>
<keyword id="KW-0346">Stress response</keyword>
<comment type="function">
    <text evidence="1">Molecular chaperone. Has ATPase activity.</text>
</comment>
<comment type="subunit">
    <text evidence="1">Homodimer.</text>
</comment>
<comment type="subcellular location">
    <subcellularLocation>
        <location evidence="1">Cytoplasm</location>
    </subcellularLocation>
</comment>
<comment type="similarity">
    <text evidence="1">Belongs to the heat shock protein 90 family.</text>
</comment>
<gene>
    <name evidence="1" type="primary">htpG</name>
    <name type="ordered locus">CLI_2051</name>
</gene>
<organism>
    <name type="scientific">Clostridium botulinum (strain Langeland / NCTC 10281 / Type F)</name>
    <dbReference type="NCBI Taxonomy" id="441772"/>
    <lineage>
        <taxon>Bacteria</taxon>
        <taxon>Bacillati</taxon>
        <taxon>Bacillota</taxon>
        <taxon>Clostridia</taxon>
        <taxon>Eubacteriales</taxon>
        <taxon>Clostridiaceae</taxon>
        <taxon>Clostridium</taxon>
    </lineage>
</organism>
<dbReference type="EMBL" id="CP000728">
    <property type="protein sequence ID" value="ABS40160.1"/>
    <property type="molecule type" value="Genomic_DNA"/>
</dbReference>
<dbReference type="RefSeq" id="WP_003405400.1">
    <property type="nucleotide sequence ID" value="NC_009699.1"/>
</dbReference>
<dbReference type="SMR" id="A7GEU9"/>
<dbReference type="KEGG" id="cbf:CLI_2051"/>
<dbReference type="HOGENOM" id="CLU_006684_3_0_9"/>
<dbReference type="Proteomes" id="UP000002410">
    <property type="component" value="Chromosome"/>
</dbReference>
<dbReference type="GO" id="GO:0005737">
    <property type="term" value="C:cytoplasm"/>
    <property type="evidence" value="ECO:0007669"/>
    <property type="project" value="UniProtKB-SubCell"/>
</dbReference>
<dbReference type="GO" id="GO:0005524">
    <property type="term" value="F:ATP binding"/>
    <property type="evidence" value="ECO:0007669"/>
    <property type="project" value="UniProtKB-UniRule"/>
</dbReference>
<dbReference type="GO" id="GO:0016887">
    <property type="term" value="F:ATP hydrolysis activity"/>
    <property type="evidence" value="ECO:0007669"/>
    <property type="project" value="InterPro"/>
</dbReference>
<dbReference type="GO" id="GO:0140662">
    <property type="term" value="F:ATP-dependent protein folding chaperone"/>
    <property type="evidence" value="ECO:0007669"/>
    <property type="project" value="InterPro"/>
</dbReference>
<dbReference type="GO" id="GO:0051082">
    <property type="term" value="F:unfolded protein binding"/>
    <property type="evidence" value="ECO:0007669"/>
    <property type="project" value="UniProtKB-UniRule"/>
</dbReference>
<dbReference type="CDD" id="cd16927">
    <property type="entry name" value="HATPase_Hsp90-like"/>
    <property type="match status" value="1"/>
</dbReference>
<dbReference type="FunFam" id="1.20.120.790:FF:000006">
    <property type="entry name" value="Chaperone protein HtpG"/>
    <property type="match status" value="1"/>
</dbReference>
<dbReference type="FunFam" id="3.40.50.11260:FF:000008">
    <property type="entry name" value="Chaperone protein HtpG"/>
    <property type="match status" value="1"/>
</dbReference>
<dbReference type="FunFam" id="3.30.565.10:FF:000054">
    <property type="entry name" value="Heat shock protein 90"/>
    <property type="match status" value="1"/>
</dbReference>
<dbReference type="FunFam" id="3.30.230.80:FF:000002">
    <property type="entry name" value="Molecular chaperone HtpG"/>
    <property type="match status" value="1"/>
</dbReference>
<dbReference type="Gene3D" id="3.30.230.80">
    <property type="match status" value="1"/>
</dbReference>
<dbReference type="Gene3D" id="3.40.50.11260">
    <property type="match status" value="1"/>
</dbReference>
<dbReference type="Gene3D" id="1.20.120.790">
    <property type="entry name" value="Heat shock protein 90, C-terminal domain"/>
    <property type="match status" value="1"/>
</dbReference>
<dbReference type="Gene3D" id="3.30.565.10">
    <property type="entry name" value="Histidine kinase-like ATPase, C-terminal domain"/>
    <property type="match status" value="1"/>
</dbReference>
<dbReference type="HAMAP" id="MF_00505">
    <property type="entry name" value="HSP90"/>
    <property type="match status" value="1"/>
</dbReference>
<dbReference type="InterPro" id="IPR036890">
    <property type="entry name" value="HATPase_C_sf"/>
</dbReference>
<dbReference type="InterPro" id="IPR019805">
    <property type="entry name" value="Heat_shock_protein_90_CS"/>
</dbReference>
<dbReference type="InterPro" id="IPR037196">
    <property type="entry name" value="HSP90_C"/>
</dbReference>
<dbReference type="InterPro" id="IPR001404">
    <property type="entry name" value="Hsp90_fam"/>
</dbReference>
<dbReference type="InterPro" id="IPR020575">
    <property type="entry name" value="Hsp90_N"/>
</dbReference>
<dbReference type="InterPro" id="IPR020568">
    <property type="entry name" value="Ribosomal_Su5_D2-typ_SF"/>
</dbReference>
<dbReference type="NCBIfam" id="NF003555">
    <property type="entry name" value="PRK05218.1"/>
    <property type="match status" value="1"/>
</dbReference>
<dbReference type="PANTHER" id="PTHR11528">
    <property type="entry name" value="HEAT SHOCK PROTEIN 90 FAMILY MEMBER"/>
    <property type="match status" value="1"/>
</dbReference>
<dbReference type="Pfam" id="PF13589">
    <property type="entry name" value="HATPase_c_3"/>
    <property type="match status" value="1"/>
</dbReference>
<dbReference type="Pfam" id="PF00183">
    <property type="entry name" value="HSP90"/>
    <property type="match status" value="2"/>
</dbReference>
<dbReference type="PIRSF" id="PIRSF002583">
    <property type="entry name" value="Hsp90"/>
    <property type="match status" value="1"/>
</dbReference>
<dbReference type="PRINTS" id="PR00775">
    <property type="entry name" value="HEATSHOCK90"/>
</dbReference>
<dbReference type="SUPFAM" id="SSF55874">
    <property type="entry name" value="ATPase domain of HSP90 chaperone/DNA topoisomerase II/histidine kinase"/>
    <property type="match status" value="1"/>
</dbReference>
<dbReference type="SUPFAM" id="SSF110942">
    <property type="entry name" value="HSP90 C-terminal domain"/>
    <property type="match status" value="1"/>
</dbReference>
<dbReference type="SUPFAM" id="SSF54211">
    <property type="entry name" value="Ribosomal protein S5 domain 2-like"/>
    <property type="match status" value="1"/>
</dbReference>
<dbReference type="PROSITE" id="PS00298">
    <property type="entry name" value="HSP90"/>
    <property type="match status" value="1"/>
</dbReference>
<sequence>METKQFKAESKRLLDLMINSIYTHKEIFLRELISNSSDAIDKIYYKTLTDDSLKFERDDYYIKVVSDKENRVLKIADTGIGMTKEELENNLGVIAKSGSLQFKKENEVKEGYDIIGQFGVGFYSAFLVSDDVTVISKAFGSNEAYKWNSKGAEGYTIEPCEKEAYGTEIILKIKDNTEEENYDEFLEEYTLKSIIKKYSDFIRYPIKMDLTKTKPKEDNKEEFEEYKEEETINSMVPIWRKNKNELKAEDYENFYAEKHYGFDKPIKYIHTSVDGVVSYNAILFIPETTPYDFYTKEYEKGLELYSSGVLIMNKCGDLLPDYFGFVKGIVDSEDLSLNISREILQHDRQLKLIAKNIKTKIKNELESLLKKERDKYEKFYESFGRQLKYGVYSDFGSNKDILQDLLMFYSSKEKKMVTLAEYVSRMPEDQKYIYYAVGESNERIEKLPQIEGVLDKGYEVLYFTDDIDEFAIKMLMNYKEKEFKSVSSGDLGIEGEEKENTSSSDDKENKELFESMKDILSGKVKDVRASKRLKNHPVCLANEGELSIEMEKVLNAMPNNQNIKADKVLEININHDVFKSLKEAYEGDKEKLKLYTDLLYNQALLIEGLAINDPVEFTNNICKIMK</sequence>
<protein>
    <recommendedName>
        <fullName evidence="1">Chaperone protein HtpG</fullName>
    </recommendedName>
    <alternativeName>
        <fullName evidence="1">Heat shock protein HtpG</fullName>
    </alternativeName>
    <alternativeName>
        <fullName evidence="1">High temperature protein G</fullName>
    </alternativeName>
</protein>
<accession>A7GEU9</accession>